<feature type="chain" id="PRO_0000126141" description="Large ribosomal subunit protein bL36">
    <location>
        <begin position="1"/>
        <end position="37"/>
    </location>
</feature>
<reference key="1">
    <citation type="journal article" date="1998" name="Nature">
        <title>The complete genome of the hyperthermophilic bacterium Aquifex aeolicus.</title>
        <authorList>
            <person name="Deckert G."/>
            <person name="Warren P.V."/>
            <person name="Gaasterland T."/>
            <person name="Young W.G."/>
            <person name="Lenox A.L."/>
            <person name="Graham D.E."/>
            <person name="Overbeek R."/>
            <person name="Snead M.A."/>
            <person name="Keller M."/>
            <person name="Aujay M."/>
            <person name="Huber R."/>
            <person name="Feldman R.A."/>
            <person name="Short J.M."/>
            <person name="Olsen G.J."/>
            <person name="Swanson R.V."/>
        </authorList>
    </citation>
    <scope>NUCLEOTIDE SEQUENCE [LARGE SCALE GENOMIC DNA]</scope>
    <source>
        <strain>VF5</strain>
    </source>
</reference>
<keyword id="KW-1185">Reference proteome</keyword>
<keyword id="KW-0687">Ribonucleoprotein</keyword>
<keyword id="KW-0689">Ribosomal protein</keyword>
<comment type="similarity">
    <text evidence="1">Belongs to the bacterial ribosomal protein bL36 family.</text>
</comment>
<dbReference type="EMBL" id="AE000657">
    <property type="protein sequence ID" value="AAC06456.1"/>
    <property type="status" value="ALT_TERM"/>
    <property type="molecule type" value="Genomic_DNA"/>
</dbReference>
<dbReference type="PIR" id="D70307">
    <property type="entry name" value="D70307"/>
</dbReference>
<dbReference type="RefSeq" id="NP_213047.1">
    <property type="nucleotide sequence ID" value="NC_000918.1"/>
</dbReference>
<dbReference type="SMR" id="O66487"/>
<dbReference type="FunCoup" id="O66487">
    <property type="interactions" value="219"/>
</dbReference>
<dbReference type="STRING" id="224324.aq_075"/>
<dbReference type="EnsemblBacteria" id="AAC06456">
    <property type="protein sequence ID" value="AAC06456"/>
    <property type="gene ID" value="aq_075"/>
</dbReference>
<dbReference type="KEGG" id="aae:aq_075"/>
<dbReference type="PATRIC" id="fig|224324.8.peg.65"/>
<dbReference type="eggNOG" id="COG0257">
    <property type="taxonomic scope" value="Bacteria"/>
</dbReference>
<dbReference type="HOGENOM" id="CLU_135723_6_2_0"/>
<dbReference type="InParanoid" id="O66487"/>
<dbReference type="Proteomes" id="UP000000798">
    <property type="component" value="Chromosome"/>
</dbReference>
<dbReference type="GO" id="GO:0005737">
    <property type="term" value="C:cytoplasm"/>
    <property type="evidence" value="ECO:0007669"/>
    <property type="project" value="UniProtKB-ARBA"/>
</dbReference>
<dbReference type="GO" id="GO:1990904">
    <property type="term" value="C:ribonucleoprotein complex"/>
    <property type="evidence" value="ECO:0007669"/>
    <property type="project" value="UniProtKB-KW"/>
</dbReference>
<dbReference type="GO" id="GO:0005840">
    <property type="term" value="C:ribosome"/>
    <property type="evidence" value="ECO:0007669"/>
    <property type="project" value="UniProtKB-KW"/>
</dbReference>
<dbReference type="GO" id="GO:0003735">
    <property type="term" value="F:structural constituent of ribosome"/>
    <property type="evidence" value="ECO:0007669"/>
    <property type="project" value="InterPro"/>
</dbReference>
<dbReference type="GO" id="GO:0006412">
    <property type="term" value="P:translation"/>
    <property type="evidence" value="ECO:0007669"/>
    <property type="project" value="UniProtKB-UniRule"/>
</dbReference>
<dbReference type="HAMAP" id="MF_00251">
    <property type="entry name" value="Ribosomal_bL36"/>
    <property type="match status" value="1"/>
</dbReference>
<dbReference type="InterPro" id="IPR000473">
    <property type="entry name" value="Ribosomal_bL36"/>
</dbReference>
<dbReference type="InterPro" id="IPR035977">
    <property type="entry name" value="Ribosomal_bL36_sp"/>
</dbReference>
<dbReference type="NCBIfam" id="TIGR01022">
    <property type="entry name" value="rpmJ_bact"/>
    <property type="match status" value="1"/>
</dbReference>
<dbReference type="PANTHER" id="PTHR42888">
    <property type="entry name" value="50S RIBOSOMAL PROTEIN L36, CHLOROPLASTIC"/>
    <property type="match status" value="1"/>
</dbReference>
<dbReference type="PANTHER" id="PTHR42888:SF1">
    <property type="entry name" value="LARGE RIBOSOMAL SUBUNIT PROTEIN BL36C"/>
    <property type="match status" value="1"/>
</dbReference>
<dbReference type="Pfam" id="PF00444">
    <property type="entry name" value="Ribosomal_L36"/>
    <property type="match status" value="1"/>
</dbReference>
<dbReference type="SUPFAM" id="SSF57840">
    <property type="entry name" value="Ribosomal protein L36"/>
    <property type="match status" value="1"/>
</dbReference>
<dbReference type="PROSITE" id="PS00828">
    <property type="entry name" value="RIBOSOMAL_L36"/>
    <property type="match status" value="1"/>
</dbReference>
<accession>O66487</accession>
<protein>
    <recommendedName>
        <fullName evidence="1">Large ribosomal subunit protein bL36</fullName>
    </recommendedName>
    <alternativeName>
        <fullName evidence="2">50S ribosomal protein L36</fullName>
    </alternativeName>
</protein>
<evidence type="ECO:0000255" key="1">
    <source>
        <dbReference type="HAMAP-Rule" id="MF_00251"/>
    </source>
</evidence>
<evidence type="ECO:0000305" key="2"/>
<sequence length="37" mass="4339">MKVRSSVKKRCAKCKIIRRKGRVMVICEIPSHKQRQG</sequence>
<name>RL36_AQUAE</name>
<proteinExistence type="inferred from homology"/>
<organism>
    <name type="scientific">Aquifex aeolicus (strain VF5)</name>
    <dbReference type="NCBI Taxonomy" id="224324"/>
    <lineage>
        <taxon>Bacteria</taxon>
        <taxon>Pseudomonadati</taxon>
        <taxon>Aquificota</taxon>
        <taxon>Aquificia</taxon>
        <taxon>Aquificales</taxon>
        <taxon>Aquificaceae</taxon>
        <taxon>Aquifex</taxon>
    </lineage>
</organism>
<gene>
    <name evidence="1" type="primary">rpmJ</name>
    <name type="ordered locus">aq_075</name>
</gene>